<dbReference type="EC" id="4.2.1.96" evidence="1"/>
<dbReference type="EMBL" id="CP000724">
    <property type="protein sequence ID" value="ABR50344.1"/>
    <property type="molecule type" value="Genomic_DNA"/>
</dbReference>
<dbReference type="RefSeq" id="WP_012065292.1">
    <property type="nucleotide sequence ID" value="NC_009633.1"/>
</dbReference>
<dbReference type="SMR" id="A6TVX6"/>
<dbReference type="STRING" id="293826.Amet_4266"/>
<dbReference type="KEGG" id="amt:Amet_4266"/>
<dbReference type="eggNOG" id="COG2154">
    <property type="taxonomic scope" value="Bacteria"/>
</dbReference>
<dbReference type="HOGENOM" id="CLU_081974_2_2_9"/>
<dbReference type="OrthoDB" id="9800108at2"/>
<dbReference type="Proteomes" id="UP000001572">
    <property type="component" value="Chromosome"/>
</dbReference>
<dbReference type="GO" id="GO:0008124">
    <property type="term" value="F:4-alpha-hydroxytetrahydrobiopterin dehydratase activity"/>
    <property type="evidence" value="ECO:0007669"/>
    <property type="project" value="UniProtKB-UniRule"/>
</dbReference>
<dbReference type="GO" id="GO:0006729">
    <property type="term" value="P:tetrahydrobiopterin biosynthetic process"/>
    <property type="evidence" value="ECO:0007669"/>
    <property type="project" value="InterPro"/>
</dbReference>
<dbReference type="CDD" id="cd00913">
    <property type="entry name" value="PCD_DCoH_subfamily_a"/>
    <property type="match status" value="1"/>
</dbReference>
<dbReference type="Gene3D" id="3.30.1360.20">
    <property type="entry name" value="Transcriptional coactivator/pterin dehydratase"/>
    <property type="match status" value="1"/>
</dbReference>
<dbReference type="HAMAP" id="MF_00434">
    <property type="entry name" value="Pterin_4_alpha"/>
    <property type="match status" value="1"/>
</dbReference>
<dbReference type="InterPro" id="IPR036428">
    <property type="entry name" value="PCD_sf"/>
</dbReference>
<dbReference type="InterPro" id="IPR050376">
    <property type="entry name" value="Pterin-4-alpha-carb_dehyd"/>
</dbReference>
<dbReference type="InterPro" id="IPR001533">
    <property type="entry name" value="Pterin_deHydtase"/>
</dbReference>
<dbReference type="PANTHER" id="PTHR42805">
    <property type="entry name" value="PTERIN-4-ALPHA-CARBINOLAMINE DEHYDRATASE-RELATED"/>
    <property type="match status" value="1"/>
</dbReference>
<dbReference type="PANTHER" id="PTHR42805:SF1">
    <property type="entry name" value="PTERIN-4-ALPHA-CARBINOLAMINE DEHYDRATASE-RELATED"/>
    <property type="match status" value="1"/>
</dbReference>
<dbReference type="Pfam" id="PF01329">
    <property type="entry name" value="Pterin_4a"/>
    <property type="match status" value="1"/>
</dbReference>
<dbReference type="SUPFAM" id="SSF55248">
    <property type="entry name" value="PCD-like"/>
    <property type="match status" value="1"/>
</dbReference>
<keyword id="KW-0456">Lyase</keyword>
<keyword id="KW-1185">Reference proteome</keyword>
<comment type="catalytic activity">
    <reaction evidence="1">
        <text>(4aS,6R)-4a-hydroxy-L-erythro-5,6,7,8-tetrahydrobiopterin = (6R)-L-erythro-6,7-dihydrobiopterin + H2O</text>
        <dbReference type="Rhea" id="RHEA:11920"/>
        <dbReference type="ChEBI" id="CHEBI:15377"/>
        <dbReference type="ChEBI" id="CHEBI:15642"/>
        <dbReference type="ChEBI" id="CHEBI:43120"/>
        <dbReference type="EC" id="4.2.1.96"/>
    </reaction>
</comment>
<comment type="similarity">
    <text evidence="1">Belongs to the pterin-4-alpha-carbinolamine dehydratase family.</text>
</comment>
<organism>
    <name type="scientific">Alkaliphilus metalliredigens (strain QYMF)</name>
    <dbReference type="NCBI Taxonomy" id="293826"/>
    <lineage>
        <taxon>Bacteria</taxon>
        <taxon>Bacillati</taxon>
        <taxon>Bacillota</taxon>
        <taxon>Clostridia</taxon>
        <taxon>Peptostreptococcales</taxon>
        <taxon>Natronincolaceae</taxon>
        <taxon>Alkaliphilus</taxon>
    </lineage>
</organism>
<feature type="chain" id="PRO_1000060222" description="Putative pterin-4-alpha-carbinolamine dehydratase">
    <location>
        <begin position="1"/>
        <end position="111"/>
    </location>
</feature>
<sequence length="111" mass="12814">MNNLAEKKCIPCSLGTPPLSSDEIKRYISQLHEEWKVINDHHLEREFKFKNFKEALSYTNVIGQLAEKEGHHPDMLLSWGKVKITLFTHKIDGLSESDFVFAAKVDKQQSE</sequence>
<gene>
    <name type="ordered locus">Amet_4266</name>
</gene>
<proteinExistence type="inferred from homology"/>
<evidence type="ECO:0000255" key="1">
    <source>
        <dbReference type="HAMAP-Rule" id="MF_00434"/>
    </source>
</evidence>
<protein>
    <recommendedName>
        <fullName evidence="1">Putative pterin-4-alpha-carbinolamine dehydratase</fullName>
        <shortName evidence="1">PHS</shortName>
        <ecNumber evidence="1">4.2.1.96</ecNumber>
    </recommendedName>
    <alternativeName>
        <fullName evidence="1">4-alpha-hydroxy-tetrahydropterin dehydratase</fullName>
    </alternativeName>
    <alternativeName>
        <fullName evidence="1">Pterin carbinolamine dehydratase</fullName>
        <shortName evidence="1">PCD</shortName>
    </alternativeName>
</protein>
<name>PHS_ALKMQ</name>
<reference key="1">
    <citation type="journal article" date="2016" name="Genome Announc.">
        <title>Complete genome sequence of Alkaliphilus metalliredigens strain QYMF, an alkaliphilic and metal-reducing bacterium isolated from borax-contaminated leachate ponds.</title>
        <authorList>
            <person name="Hwang C."/>
            <person name="Copeland A."/>
            <person name="Lucas S."/>
            <person name="Lapidus A."/>
            <person name="Barry K."/>
            <person name="Detter J.C."/>
            <person name="Glavina Del Rio T."/>
            <person name="Hammon N."/>
            <person name="Israni S."/>
            <person name="Dalin E."/>
            <person name="Tice H."/>
            <person name="Pitluck S."/>
            <person name="Chertkov O."/>
            <person name="Brettin T."/>
            <person name="Bruce D."/>
            <person name="Han C."/>
            <person name="Schmutz J."/>
            <person name="Larimer F."/>
            <person name="Land M.L."/>
            <person name="Hauser L."/>
            <person name="Kyrpides N."/>
            <person name="Mikhailova N."/>
            <person name="Ye Q."/>
            <person name="Zhou J."/>
            <person name="Richardson P."/>
            <person name="Fields M.W."/>
        </authorList>
    </citation>
    <scope>NUCLEOTIDE SEQUENCE [LARGE SCALE GENOMIC DNA]</scope>
    <source>
        <strain>QYMF</strain>
    </source>
</reference>
<accession>A6TVX6</accession>